<proteinExistence type="evidence at protein level"/>
<gene>
    <name type="primary">murE</name>
    <name type="ordered locus">b0085</name>
    <name type="ordered locus">JW0083</name>
</gene>
<comment type="function">
    <text evidence="3 5 6">Catalyzes the addition of meso-diaminopimelic acid to the nucleotide precursor UDP-N-acetylmuramoyl-L-alanyl-D-glutamate (UMAG) in the biosynthesis of bacterial cell-wall peptidoglycan. Is also able to use many meso-diaminopimelate analogs as substrates, although much less efficiently, but not L-lysine.</text>
</comment>
<comment type="catalytic activity">
    <reaction evidence="3 5">
        <text>UDP-N-acetyl-alpha-D-muramoyl-L-alanyl-D-glutamate + meso-2,6-diaminopimelate + ATP = UDP-N-acetyl-alpha-D-muramoyl-L-alanyl-gamma-D-glutamyl-meso-2,6-diaminopimelate + ADP + phosphate + H(+)</text>
        <dbReference type="Rhea" id="RHEA:23676"/>
        <dbReference type="ChEBI" id="CHEBI:15378"/>
        <dbReference type="ChEBI" id="CHEBI:30616"/>
        <dbReference type="ChEBI" id="CHEBI:43474"/>
        <dbReference type="ChEBI" id="CHEBI:57791"/>
        <dbReference type="ChEBI" id="CHEBI:83900"/>
        <dbReference type="ChEBI" id="CHEBI:83905"/>
        <dbReference type="ChEBI" id="CHEBI:456216"/>
        <dbReference type="EC" id="6.3.2.13"/>
    </reaction>
</comment>
<comment type="cofactor">
    <cofactor evidence="2">
        <name>Mg(2+)</name>
        <dbReference type="ChEBI" id="CHEBI:18420"/>
    </cofactor>
</comment>
<comment type="activity regulation">
    <text evidence="5">Activated by potassium phosphate.</text>
</comment>
<comment type="biophysicochemical properties">
    <kinetics>
        <KM evidence="5 7">76 uM for UDP-N-acetylmuramoyl-L-Ala-D-Glu</KM>
        <KM evidence="5 7">36 uM for meso-diaminopimelate</KM>
        <KM evidence="5 7">1500 uM for meso-lanthionine</KM>
        <KM evidence="5 7">3900 uM for L-allo-cystathionine</KM>
        <KM evidence="5 7">10000 uM for D-allo-cystathionine</KM>
        <KM evidence="5 7">620 uM for ATP</KM>
        <Vmax evidence="5 7">32.0 nmol/min/mg enzyme with meso-diaminopimelate as substrate</Vmax>
        <Vmax evidence="5 7">23.0 nmol/min/mg enzyme with meso-lanthionine as substrate</Vmax>
        <Vmax evidence="5 7">19.0 nmol/min/mg enzyme with L-allo-cystathionine as substrate</Vmax>
        <Vmax evidence="5 7">23.0 nmol/min/mg enzyme with L-allo-cystathionine as substrate</Vmax>
    </kinetics>
    <phDependence>
        <text evidence="5">Optimum pH is about 8.</text>
    </phDependence>
</comment>
<comment type="pathway">
    <text>Cell wall biogenesis; peptidoglycan biosynthesis.</text>
</comment>
<comment type="interaction">
    <interactant intactId="EBI-553061">
        <id>P22188</id>
    </interactant>
    <interactant intactId="EBI-546107">
        <id>P0A6F1</id>
        <label>carA</label>
    </interactant>
    <organismsDiffer>false</organismsDiffer>
    <experiments>2</experiments>
</comment>
<comment type="interaction">
    <interactant intactId="EBI-553061">
        <id>P22188</id>
    </interactant>
    <interactant intactId="EBI-545264">
        <id>P76069</id>
        <label>ydaY</label>
    </interactant>
    <organismsDiffer>false</organismsDiffer>
    <experiments>3</experiments>
</comment>
<comment type="subcellular location">
    <subcellularLocation>
        <location evidence="8">Cytoplasm</location>
    </subcellularLocation>
</comment>
<comment type="PTM">
    <text evidence="3">Carboxylation is probably crucial for Mg(2+) binding and, consequently, for the gamma-phosphate positioning of ATP.</text>
</comment>
<comment type="similarity">
    <text evidence="8">Belongs to the MurCDEF family. MurE subfamily.</text>
</comment>
<dbReference type="EC" id="6.3.2.13" evidence="3 5"/>
<dbReference type="EMBL" id="X55814">
    <property type="protein sequence ID" value="CAA39334.1"/>
    <property type="molecule type" value="Genomic_DNA"/>
</dbReference>
<dbReference type="EMBL" id="X55034">
    <property type="protein sequence ID" value="CAA38862.1"/>
    <property type="molecule type" value="Genomic_DNA"/>
</dbReference>
<dbReference type="EMBL" id="U00096">
    <property type="protein sequence ID" value="AAC73196.1"/>
    <property type="molecule type" value="Genomic_DNA"/>
</dbReference>
<dbReference type="EMBL" id="AP009048">
    <property type="protein sequence ID" value="BAB96653.1"/>
    <property type="molecule type" value="Genomic_DNA"/>
</dbReference>
<dbReference type="EMBL" id="U67894">
    <property type="protein sequence ID" value="AAB60789.1"/>
    <property type="molecule type" value="Genomic_DNA"/>
</dbReference>
<dbReference type="PIR" id="S14384">
    <property type="entry name" value="S14384"/>
</dbReference>
<dbReference type="RefSeq" id="NP_414627.1">
    <property type="nucleotide sequence ID" value="NC_000913.3"/>
</dbReference>
<dbReference type="RefSeq" id="WP_000775093.1">
    <property type="nucleotide sequence ID" value="NZ_LN832404.1"/>
</dbReference>
<dbReference type="PDB" id="1E8C">
    <property type="method" value="X-ray"/>
    <property type="resolution" value="2.00 A"/>
    <property type="chains" value="A/B=2-495"/>
</dbReference>
<dbReference type="PDB" id="7B53">
    <property type="method" value="X-ray"/>
    <property type="resolution" value="1.75 A"/>
    <property type="chains" value="A/B=1-495"/>
</dbReference>
<dbReference type="PDB" id="7B60">
    <property type="method" value="X-ray"/>
    <property type="resolution" value="1.91 A"/>
    <property type="chains" value="A/B=1-495"/>
</dbReference>
<dbReference type="PDB" id="7B61">
    <property type="method" value="X-ray"/>
    <property type="resolution" value="1.65 A"/>
    <property type="chains" value="A/B=1-495"/>
</dbReference>
<dbReference type="PDB" id="7B68">
    <property type="method" value="X-ray"/>
    <property type="resolution" value="1.89 A"/>
    <property type="chains" value="A/B=1-495"/>
</dbReference>
<dbReference type="PDB" id="7B6I">
    <property type="method" value="X-ray"/>
    <property type="resolution" value="2.07 A"/>
    <property type="chains" value="A/B=1-495"/>
</dbReference>
<dbReference type="PDB" id="7B6J">
    <property type="method" value="X-ray"/>
    <property type="resolution" value="2.09 A"/>
    <property type="chains" value="A/B=1-495"/>
</dbReference>
<dbReference type="PDB" id="7B6K">
    <property type="method" value="X-ray"/>
    <property type="resolution" value="1.84 A"/>
    <property type="chains" value="A/B=1-495"/>
</dbReference>
<dbReference type="PDB" id="7B6L">
    <property type="method" value="X-ray"/>
    <property type="resolution" value="2.08 A"/>
    <property type="chains" value="A/B=1-495"/>
</dbReference>
<dbReference type="PDB" id="7B6M">
    <property type="method" value="X-ray"/>
    <property type="resolution" value="1.67 A"/>
    <property type="chains" value="A/B=1-495"/>
</dbReference>
<dbReference type="PDB" id="7B6N">
    <property type="method" value="X-ray"/>
    <property type="resolution" value="1.79 A"/>
    <property type="chains" value="A/B=1-495"/>
</dbReference>
<dbReference type="PDB" id="7B6O">
    <property type="method" value="X-ray"/>
    <property type="resolution" value="1.86 A"/>
    <property type="chains" value="A/B=1-495"/>
</dbReference>
<dbReference type="PDB" id="7B6P">
    <property type="method" value="X-ray"/>
    <property type="resolution" value="1.68 A"/>
    <property type="chains" value="A/B=1-495"/>
</dbReference>
<dbReference type="PDB" id="7B6Q">
    <property type="method" value="X-ray"/>
    <property type="resolution" value="1.82 A"/>
    <property type="chains" value="A/B=1-495"/>
</dbReference>
<dbReference type="PDB" id="7B9E">
    <property type="method" value="X-ray"/>
    <property type="resolution" value="2.12 A"/>
    <property type="chains" value="A/B=1-495"/>
</dbReference>
<dbReference type="PDB" id="7B9W">
    <property type="method" value="X-ray"/>
    <property type="resolution" value="1.82 A"/>
    <property type="chains" value="AAA/BBB=1-495"/>
</dbReference>
<dbReference type="PDBsum" id="1E8C"/>
<dbReference type="PDBsum" id="7B53"/>
<dbReference type="PDBsum" id="7B60"/>
<dbReference type="PDBsum" id="7B61"/>
<dbReference type="PDBsum" id="7B68"/>
<dbReference type="PDBsum" id="7B6I"/>
<dbReference type="PDBsum" id="7B6J"/>
<dbReference type="PDBsum" id="7B6K"/>
<dbReference type="PDBsum" id="7B6L"/>
<dbReference type="PDBsum" id="7B6M"/>
<dbReference type="PDBsum" id="7B6N"/>
<dbReference type="PDBsum" id="7B6O"/>
<dbReference type="PDBsum" id="7B6P"/>
<dbReference type="PDBsum" id="7B6Q"/>
<dbReference type="PDBsum" id="7B9E"/>
<dbReference type="PDBsum" id="7B9W"/>
<dbReference type="SMR" id="P22188"/>
<dbReference type="BioGRID" id="4261641">
    <property type="interactions" value="529"/>
</dbReference>
<dbReference type="BioGRID" id="849192">
    <property type="interactions" value="4"/>
</dbReference>
<dbReference type="DIP" id="DIP-10280N"/>
<dbReference type="FunCoup" id="P22188">
    <property type="interactions" value="755"/>
</dbReference>
<dbReference type="IntAct" id="P22188">
    <property type="interactions" value="20"/>
</dbReference>
<dbReference type="STRING" id="511145.b0085"/>
<dbReference type="BindingDB" id="P22188"/>
<dbReference type="ChEMBL" id="CHEMBL3309032"/>
<dbReference type="DrugBank" id="DB03590">
    <property type="generic name" value="2,6-Diaminopimelic Acid"/>
</dbReference>
<dbReference type="DrugBank" id="DB03801">
    <property type="generic name" value="Lysine Nz-Carboxylic Acid"/>
</dbReference>
<dbReference type="DrugBank" id="DB02314">
    <property type="generic name" value="Uridine-5'-Diphosphate-N-Acetylmuramoyl-L-Alanine-D-Glutamate"/>
</dbReference>
<dbReference type="jPOST" id="P22188"/>
<dbReference type="PaxDb" id="511145-b0085"/>
<dbReference type="EnsemblBacteria" id="AAC73196">
    <property type="protein sequence ID" value="AAC73196"/>
    <property type="gene ID" value="b0085"/>
</dbReference>
<dbReference type="GeneID" id="944791"/>
<dbReference type="KEGG" id="ecj:JW0083"/>
<dbReference type="KEGG" id="eco:b0085"/>
<dbReference type="KEGG" id="ecoc:C3026_00330"/>
<dbReference type="PATRIC" id="fig|1411691.4.peg.2195"/>
<dbReference type="EchoBASE" id="EB0616"/>
<dbReference type="eggNOG" id="COG0769">
    <property type="taxonomic scope" value="Bacteria"/>
</dbReference>
<dbReference type="HOGENOM" id="CLU_022291_3_2_6"/>
<dbReference type="InParanoid" id="P22188"/>
<dbReference type="OMA" id="EYFIMEV"/>
<dbReference type="OrthoDB" id="9800958at2"/>
<dbReference type="PhylomeDB" id="P22188"/>
<dbReference type="BioCyc" id="EcoCyc:UDP-NACMURALGLDAPLIG-MONOMER"/>
<dbReference type="BioCyc" id="MetaCyc:UDP-NACMURALGLDAPLIG-MONOMER"/>
<dbReference type="BRENDA" id="6.3.2.13">
    <property type="organism ID" value="2026"/>
</dbReference>
<dbReference type="UniPathway" id="UPA00219"/>
<dbReference type="EvolutionaryTrace" id="P22188"/>
<dbReference type="PRO" id="PR:P22188"/>
<dbReference type="Proteomes" id="UP000000625">
    <property type="component" value="Chromosome"/>
</dbReference>
<dbReference type="GO" id="GO:0005829">
    <property type="term" value="C:cytosol"/>
    <property type="evidence" value="ECO:0000314"/>
    <property type="project" value="EcoCyc"/>
</dbReference>
<dbReference type="GO" id="GO:0005524">
    <property type="term" value="F:ATP binding"/>
    <property type="evidence" value="ECO:0007669"/>
    <property type="project" value="UniProtKB-UniRule"/>
</dbReference>
<dbReference type="GO" id="GO:0000287">
    <property type="term" value="F:magnesium ion binding"/>
    <property type="evidence" value="ECO:0007669"/>
    <property type="project" value="UniProtKB-UniRule"/>
</dbReference>
<dbReference type="GO" id="GO:0008765">
    <property type="term" value="F:UDP-N-acetylmuramoylalanyl-D-glutamate-2,6-diaminopimelate ligase activity"/>
    <property type="evidence" value="ECO:0000314"/>
    <property type="project" value="EcoCyc"/>
</dbReference>
<dbReference type="GO" id="GO:0051301">
    <property type="term" value="P:cell division"/>
    <property type="evidence" value="ECO:0007669"/>
    <property type="project" value="UniProtKB-KW"/>
</dbReference>
<dbReference type="GO" id="GO:0071555">
    <property type="term" value="P:cell wall organization"/>
    <property type="evidence" value="ECO:0007669"/>
    <property type="project" value="UniProtKB-KW"/>
</dbReference>
<dbReference type="GO" id="GO:0009252">
    <property type="term" value="P:peptidoglycan biosynthetic process"/>
    <property type="evidence" value="ECO:0000315"/>
    <property type="project" value="EcoCyc"/>
</dbReference>
<dbReference type="GO" id="GO:0008360">
    <property type="term" value="P:regulation of cell shape"/>
    <property type="evidence" value="ECO:0007669"/>
    <property type="project" value="UniProtKB-KW"/>
</dbReference>
<dbReference type="FunFam" id="3.40.1190.10:FF:000006">
    <property type="entry name" value="UDP-N-acetylmuramoyl-L-alanyl-D-glutamate--2,6-diaminopimelate ligase"/>
    <property type="match status" value="1"/>
</dbReference>
<dbReference type="FunFam" id="3.40.1390.10:FF:000002">
    <property type="entry name" value="UDP-N-acetylmuramoyl-L-alanyl-D-glutamate--2,6-diaminopimelate ligase"/>
    <property type="match status" value="1"/>
</dbReference>
<dbReference type="FunFam" id="3.90.190.20:FF:000006">
    <property type="entry name" value="UDP-N-acetylmuramoyl-L-alanyl-D-glutamate--2,6-diaminopimelate ligase"/>
    <property type="match status" value="1"/>
</dbReference>
<dbReference type="Gene3D" id="3.90.190.20">
    <property type="entry name" value="Mur ligase, C-terminal domain"/>
    <property type="match status" value="1"/>
</dbReference>
<dbReference type="Gene3D" id="3.40.1190.10">
    <property type="entry name" value="Mur-like, catalytic domain"/>
    <property type="match status" value="1"/>
</dbReference>
<dbReference type="Gene3D" id="3.40.1390.10">
    <property type="entry name" value="MurE/MurF, N-terminal domain"/>
    <property type="match status" value="1"/>
</dbReference>
<dbReference type="HAMAP" id="MF_00208">
    <property type="entry name" value="MurE"/>
    <property type="match status" value="1"/>
</dbReference>
<dbReference type="InterPro" id="IPR036565">
    <property type="entry name" value="Mur-like_cat_sf"/>
</dbReference>
<dbReference type="InterPro" id="IPR004101">
    <property type="entry name" value="Mur_ligase_C"/>
</dbReference>
<dbReference type="InterPro" id="IPR036615">
    <property type="entry name" value="Mur_ligase_C_dom_sf"/>
</dbReference>
<dbReference type="InterPro" id="IPR013221">
    <property type="entry name" value="Mur_ligase_cen"/>
</dbReference>
<dbReference type="InterPro" id="IPR000713">
    <property type="entry name" value="Mur_ligase_N"/>
</dbReference>
<dbReference type="InterPro" id="IPR035911">
    <property type="entry name" value="MurE/MurF_N"/>
</dbReference>
<dbReference type="InterPro" id="IPR005761">
    <property type="entry name" value="UDP-N-AcMur-Glu-dNH2Pim_ligase"/>
</dbReference>
<dbReference type="NCBIfam" id="TIGR01085">
    <property type="entry name" value="murE"/>
    <property type="match status" value="1"/>
</dbReference>
<dbReference type="NCBIfam" id="NF001123">
    <property type="entry name" value="PRK00139.1-1"/>
    <property type="match status" value="1"/>
</dbReference>
<dbReference type="NCBIfam" id="NF001124">
    <property type="entry name" value="PRK00139.1-2"/>
    <property type="match status" value="1"/>
</dbReference>
<dbReference type="NCBIfam" id="NF001126">
    <property type="entry name" value="PRK00139.1-4"/>
    <property type="match status" value="1"/>
</dbReference>
<dbReference type="PANTHER" id="PTHR23135">
    <property type="entry name" value="MUR LIGASE FAMILY MEMBER"/>
    <property type="match status" value="1"/>
</dbReference>
<dbReference type="PANTHER" id="PTHR23135:SF4">
    <property type="entry name" value="UDP-N-ACETYLMURAMOYL-L-ALANYL-D-GLUTAMATE--2,6-DIAMINOPIMELATE LIGASE MURE HOMOLOG, CHLOROPLASTIC"/>
    <property type="match status" value="1"/>
</dbReference>
<dbReference type="Pfam" id="PF01225">
    <property type="entry name" value="Mur_ligase"/>
    <property type="match status" value="1"/>
</dbReference>
<dbReference type="Pfam" id="PF02875">
    <property type="entry name" value="Mur_ligase_C"/>
    <property type="match status" value="1"/>
</dbReference>
<dbReference type="Pfam" id="PF08245">
    <property type="entry name" value="Mur_ligase_M"/>
    <property type="match status" value="1"/>
</dbReference>
<dbReference type="SUPFAM" id="SSF53623">
    <property type="entry name" value="MurD-like peptide ligases, catalytic domain"/>
    <property type="match status" value="1"/>
</dbReference>
<dbReference type="SUPFAM" id="SSF53244">
    <property type="entry name" value="MurD-like peptide ligases, peptide-binding domain"/>
    <property type="match status" value="1"/>
</dbReference>
<dbReference type="SUPFAM" id="SSF63418">
    <property type="entry name" value="MurE/MurF N-terminal domain"/>
    <property type="match status" value="1"/>
</dbReference>
<reference key="1">
    <citation type="journal article" date="1989" name="Can. J. Microbiol.">
        <title>Nucleotide sequence of the murE gene of Escherichia coli.</title>
        <authorList>
            <person name="Tao J.-S."/>
            <person name="Ishiguro E.E."/>
        </authorList>
    </citation>
    <scope>NUCLEOTIDE SEQUENCE [GENOMIC DNA]</scope>
    <source>
        <strain>K12</strain>
    </source>
</reference>
<reference key="2">
    <citation type="journal article" date="1992" name="Nucleic Acids Res.">
        <title>Systematic sequencing of the Escherichia coli genome: analysis of the 0-2.4 min region.</title>
        <authorList>
            <person name="Yura T."/>
            <person name="Mori H."/>
            <person name="Nagai H."/>
            <person name="Nagata T."/>
            <person name="Ishihama A."/>
            <person name="Fujita N."/>
            <person name="Isono K."/>
            <person name="Mizobuchi K."/>
            <person name="Nakata A."/>
        </authorList>
    </citation>
    <scope>NUCLEOTIDE SEQUENCE [LARGE SCALE GENOMIC DNA]</scope>
    <source>
        <strain>K12</strain>
    </source>
</reference>
<reference key="3">
    <citation type="journal article" date="1997" name="Science">
        <title>The complete genome sequence of Escherichia coli K-12.</title>
        <authorList>
            <person name="Blattner F.R."/>
            <person name="Plunkett G. III"/>
            <person name="Bloch C.A."/>
            <person name="Perna N.T."/>
            <person name="Burland V."/>
            <person name="Riley M."/>
            <person name="Collado-Vides J."/>
            <person name="Glasner J.D."/>
            <person name="Rode C.K."/>
            <person name="Mayhew G.F."/>
            <person name="Gregor J."/>
            <person name="Davis N.W."/>
            <person name="Kirkpatrick H.A."/>
            <person name="Goeden M.A."/>
            <person name="Rose D.J."/>
            <person name="Mau B."/>
            <person name="Shao Y."/>
        </authorList>
    </citation>
    <scope>NUCLEOTIDE SEQUENCE [LARGE SCALE GENOMIC DNA]</scope>
    <source>
        <strain>K12 / MG1655 / ATCC 47076</strain>
    </source>
</reference>
<reference key="4">
    <citation type="journal article" date="2006" name="Mol. Syst. Biol.">
        <title>Highly accurate genome sequences of Escherichia coli K-12 strains MG1655 and W3110.</title>
        <authorList>
            <person name="Hayashi K."/>
            <person name="Morooka N."/>
            <person name="Yamamoto Y."/>
            <person name="Fujita K."/>
            <person name="Isono K."/>
            <person name="Choi S."/>
            <person name="Ohtsubo E."/>
            <person name="Baba T."/>
            <person name="Wanner B.L."/>
            <person name="Mori H."/>
            <person name="Horiuchi T."/>
        </authorList>
    </citation>
    <scope>NUCLEOTIDE SEQUENCE [LARGE SCALE GENOMIC DNA]</scope>
    <source>
        <strain>K12 / W3110 / ATCC 27325 / DSM 5911</strain>
    </source>
</reference>
<reference key="5">
    <citation type="journal article" date="1997" name="Biochemistry">
        <title>Conditionally lethal Escherichia coli murein mutants contain point defects that map to regions conserved among murein and folyl poly-gamma-glutamate ligases: identification of a ligase superfamily.</title>
        <authorList>
            <person name="Eveland S.S."/>
            <person name="Pompliano D.L."/>
            <person name="Anderson M.S."/>
        </authorList>
    </citation>
    <scope>NUCLEOTIDE SEQUENCE [GENOMIC DNA]</scope>
    <scope>MUTANT MURE1</scope>
    <source>
        <strain>CGSC 5989</strain>
    </source>
</reference>
<reference key="6">
    <citation type="journal article" date="1990" name="Biochem. J.">
        <title>Revised interpretation of the sequence containing the murE gene encoding the UDP-N-acetylmuramyl-tripeptide synthetase of Escherichia coli.</title>
        <authorList>
            <person name="Michaud C."/>
            <person name="Parquet C."/>
            <person name="Flouret B."/>
            <person name="Blanot D."/>
            <person name="van Heijenoort J."/>
        </authorList>
    </citation>
    <scope>NUCLEOTIDE SEQUENCE [GENOMIC DNA] OF 1-124</scope>
    <scope>PROTEIN SEQUENCE OF 2-19</scope>
    <scope>SEQUENCE REVISION</scope>
</reference>
<reference key="7">
    <citation type="journal article" date="1990" name="Eur. J. Biochem.">
        <title>Over-production, purification and properties of the uridine-diphosphate-N-acetylmuramoyl-L-alanyl-D-glutamate: meso-2,6-diaminopimelate ligase from Escherichia coli.</title>
        <authorList>
            <person name="Michaud C."/>
            <person name="Mengin-Lecreulx D."/>
            <person name="van Heijenoort J."/>
            <person name="Blanot D."/>
        </authorList>
    </citation>
    <scope>PROTEIN SEQUENCE OF 2-19</scope>
    <scope>FUNCTION</scope>
    <scope>CATALYTIC ACTIVITY</scope>
    <scope>BIOPHYSICOCHEMICAL PROPERTIES</scope>
    <scope>ACTIVITY REGULATION</scope>
    <scope>SUBSTRATE SPECIFICITY</scope>
</reference>
<reference key="8">
    <citation type="journal article" date="1985" name="Eur. J. Biochem.">
        <title>Specificity of the uridine-diphosphate-N-acetylmuramyl-L-alanyl-D-glutamate:meso-2,6-diaminopimelate synthetase from Escherichia coli.</title>
        <authorList>
            <person name="Abo-Ghalia M."/>
            <person name="Michaud C."/>
            <person name="Blanot D."/>
            <person name="van Heijenoort J."/>
        </authorList>
    </citation>
    <scope>FUNCTION</scope>
    <scope>SUBSTRATE SPECIFICITY</scope>
</reference>
<reference key="9">
    <citation type="journal article" date="1994" name="J. Bacteriol.">
        <title>Replacement of diaminopimelic acid by cystathionine or lanthionine in the peptidoglycan of Escherichia coli.</title>
        <authorList>
            <person name="Mengin-Lecreulx D."/>
            <person name="Blanot D."/>
            <person name="van Heijenoort J."/>
        </authorList>
    </citation>
    <scope>KINETIC PARAMETERS</scope>
    <scope>SUBSTRATE SPECIFICITY</scope>
</reference>
<reference key="10">
    <citation type="journal article" date="1997" name="Electrophoresis">
        <title>Escherichia coli proteome analysis using the gene-protein database.</title>
        <authorList>
            <person name="VanBogelen R.A."/>
            <person name="Abshire K.Z."/>
            <person name="Moldover B."/>
            <person name="Olson E.R."/>
            <person name="Neidhardt F.C."/>
        </authorList>
    </citation>
    <scope>IDENTIFICATION BY 2D-GEL</scope>
</reference>
<reference key="11">
    <citation type="journal article" date="2001" name="J. Biol. Chem.">
        <title>Crystal structure of UDP-N-acetylmuramoyl-L-alanyl-D-glutamate: meso-diaminopimelate ligase from Escherichia coli.</title>
        <authorList>
            <person name="Gordon E."/>
            <person name="Flouret B."/>
            <person name="Chantalat L."/>
            <person name="van Heijenoort J."/>
            <person name="Mengin-Lecreulx D."/>
            <person name="Dideberg O."/>
        </authorList>
    </citation>
    <scope>X-RAY CRYSTALLOGRAPHY (2.0 ANGSTROMS) IN COMPLEX WITH PRODUCT</scope>
    <scope>FUNCTION</scope>
    <scope>CATALYTIC ACTIVITY</scope>
    <scope>CARBOXYLATION AT LYS-225</scope>
</reference>
<sequence length="495" mass="53344">MADRNLRDLLAPWVPDAPSRALREMTLDSRVAAAGDLFVAVVGHQADGRRYIPQAIAQGVAAIIAEAKDEATDGEIREMHGVPVIYLSQLNERLSALAGRFYHEPSDNLRLVGVTGTNGKTTTTQLLAQWSQLLGEISAVMGTVGNGLLGKVIPTENTTGSAVDVQHELAGLVDQGATFCAMEVSSHGLVQHRVAALKFAASVFTNLSRDHLDYHGDMEHYEAAKWLLYSEHHCGQAIINADDEVGRRWLAKLPDAVAVSMEDHINPNCHGRWLKATEVNYHDSGATIRFSSSWGDGEIESHLMGAFNVSNLLLALATLLALGYPLADLLKTAARLQPVCGRMEVFTAPGKPTVVVDYAHTPDALEKALQAARLHCAGKLWCVFGCGGDRDKGKRPLMGAIAEEFADVAVVTDDNPRTEEPRAIINDILAGMLDAGHAKVMEGRAEAVTCAVMQAKENDVVLVAGKGHEDYQIVGNQRLDYSDRVTVARLLGVIA</sequence>
<keyword id="KW-0002">3D-structure</keyword>
<keyword id="KW-0067">ATP-binding</keyword>
<keyword id="KW-0131">Cell cycle</keyword>
<keyword id="KW-0132">Cell division</keyword>
<keyword id="KW-0133">Cell shape</keyword>
<keyword id="KW-0961">Cell wall biogenesis/degradation</keyword>
<keyword id="KW-0963">Cytoplasm</keyword>
<keyword id="KW-0903">Direct protein sequencing</keyword>
<keyword id="KW-0436">Ligase</keyword>
<keyword id="KW-0460">Magnesium</keyword>
<keyword id="KW-0547">Nucleotide-binding</keyword>
<keyword id="KW-0573">Peptidoglycan synthesis</keyword>
<keyword id="KW-1185">Reference proteome</keyword>
<accession>P22188</accession>
<accession>O07101</accession>
<evidence type="ECO:0000255" key="1"/>
<evidence type="ECO:0000255" key="2">
    <source>
        <dbReference type="HAMAP-Rule" id="MF_00208"/>
    </source>
</evidence>
<evidence type="ECO:0000269" key="3">
    <source>
    </source>
</evidence>
<evidence type="ECO:0000269" key="4">
    <source>
    </source>
</evidence>
<evidence type="ECO:0000269" key="5">
    <source>
    </source>
</evidence>
<evidence type="ECO:0000269" key="6">
    <source>
    </source>
</evidence>
<evidence type="ECO:0000269" key="7">
    <source>
    </source>
</evidence>
<evidence type="ECO:0000305" key="8"/>
<evidence type="ECO:0007829" key="9">
    <source>
        <dbReference type="PDB" id="1E8C"/>
    </source>
</evidence>
<evidence type="ECO:0007829" key="10">
    <source>
        <dbReference type="PDB" id="7B61"/>
    </source>
</evidence>
<organism>
    <name type="scientific">Escherichia coli (strain K12)</name>
    <dbReference type="NCBI Taxonomy" id="83333"/>
    <lineage>
        <taxon>Bacteria</taxon>
        <taxon>Pseudomonadati</taxon>
        <taxon>Pseudomonadota</taxon>
        <taxon>Gammaproteobacteria</taxon>
        <taxon>Enterobacterales</taxon>
        <taxon>Enterobacteriaceae</taxon>
        <taxon>Escherichia</taxon>
    </lineage>
</organism>
<protein>
    <recommendedName>
        <fullName>UDP-N-acetylmuramoyl-L-alanyl-D-glutamate--2,6-diaminopimelate ligase</fullName>
        <ecNumber evidence="3 5">6.3.2.13</ecNumber>
    </recommendedName>
    <alternativeName>
        <fullName>Meso-A2pm-adding enzyme</fullName>
    </alternativeName>
    <alternativeName>
        <fullName>Meso-diaminopimelate-adding enzyme</fullName>
    </alternativeName>
    <alternativeName>
        <fullName>UDP-MurNAc-L-Ala-D-Glu:meso-diaminopimelate ligase</fullName>
    </alternativeName>
    <alternativeName>
        <fullName>UDP-MurNAc-tripeptide synthetase</fullName>
    </alternativeName>
    <alternativeName>
        <fullName>UDP-N-acetylmuramyl-tripeptide synthetase</fullName>
    </alternativeName>
</protein>
<feature type="initiator methionine" description="Removed" evidence="4 5">
    <location>
        <position position="1"/>
    </location>
</feature>
<feature type="chain" id="PRO_0000101893" description="UDP-N-acetylmuramoyl-L-alanyl-D-glutamate--2,6-diaminopimelate ligase">
    <location>
        <begin position="2"/>
        <end position="495"/>
    </location>
</feature>
<feature type="short sequence motif" description="Meso-diaminopimelate recognition motif">
    <location>
        <begin position="414"/>
        <end position="417"/>
    </location>
</feature>
<feature type="binding site">
    <location>
        <position position="27"/>
    </location>
    <ligand>
        <name>UDP-N-acetyl-alpha-D-muramoyl-L-alanyl-D-glutamate</name>
        <dbReference type="ChEBI" id="CHEBI:83900"/>
    </ligand>
</feature>
<feature type="binding site">
    <location>
        <position position="29"/>
    </location>
    <ligand>
        <name>UDP-N-acetyl-alpha-D-muramoyl-L-alanyl-D-glutamate</name>
        <dbReference type="ChEBI" id="CHEBI:83900"/>
    </ligand>
</feature>
<feature type="binding site">
    <location>
        <begin position="44"/>
        <end position="46"/>
    </location>
    <ligand>
        <name>UDP-N-acetyl-alpha-D-muramoyl-L-alanyl-D-glutamate</name>
        <dbReference type="ChEBI" id="CHEBI:83900"/>
    </ligand>
</feature>
<feature type="binding site" evidence="1">
    <location>
        <begin position="116"/>
        <end position="122"/>
    </location>
    <ligand>
        <name>ATP</name>
        <dbReference type="ChEBI" id="CHEBI:30616"/>
    </ligand>
</feature>
<feature type="binding site">
    <location>
        <position position="157"/>
    </location>
    <ligand>
        <name>UDP-N-acetyl-alpha-D-muramoyl-L-alanyl-D-glutamate</name>
        <dbReference type="ChEBI" id="CHEBI:83900"/>
    </ligand>
</feature>
<feature type="binding site">
    <location>
        <begin position="158"/>
        <end position="159"/>
    </location>
    <ligand>
        <name>UDP-N-acetyl-alpha-D-muramoyl-L-alanyl-D-glutamate</name>
        <dbReference type="ChEBI" id="CHEBI:83900"/>
    </ligand>
</feature>
<feature type="binding site">
    <location>
        <position position="185"/>
    </location>
    <ligand>
        <name>UDP-N-acetyl-alpha-D-muramoyl-L-alanyl-D-glutamate</name>
        <dbReference type="ChEBI" id="CHEBI:83900"/>
    </ligand>
</feature>
<feature type="binding site">
    <location>
        <position position="191"/>
    </location>
    <ligand>
        <name>UDP-N-acetyl-alpha-D-muramoyl-L-alanyl-D-glutamate</name>
        <dbReference type="ChEBI" id="CHEBI:83900"/>
    </ligand>
</feature>
<feature type="binding site">
    <location>
        <position position="193"/>
    </location>
    <ligand>
        <name>UDP-N-acetyl-alpha-D-muramoyl-L-alanyl-D-glutamate</name>
        <dbReference type="ChEBI" id="CHEBI:83900"/>
    </ligand>
</feature>
<feature type="binding site">
    <location>
        <position position="390"/>
    </location>
    <ligand>
        <name>meso-2,6-diaminopimelate</name>
        <dbReference type="ChEBI" id="CHEBI:57791"/>
    </ligand>
</feature>
<feature type="binding site">
    <location>
        <begin position="414"/>
        <end position="417"/>
    </location>
    <ligand>
        <name>meso-2,6-diaminopimelate</name>
        <dbReference type="ChEBI" id="CHEBI:57791"/>
    </ligand>
</feature>
<feature type="binding site">
    <location>
        <position position="465"/>
    </location>
    <ligand>
        <name>meso-2,6-diaminopimelate</name>
        <dbReference type="ChEBI" id="CHEBI:57791"/>
    </ligand>
</feature>
<feature type="binding site">
    <location>
        <position position="469"/>
    </location>
    <ligand>
        <name>meso-2,6-diaminopimelate</name>
        <dbReference type="ChEBI" id="CHEBI:57791"/>
    </ligand>
</feature>
<feature type="modified residue" description="N6-carboxylysine" evidence="3">
    <location>
        <position position="225"/>
    </location>
</feature>
<feature type="sequence variant" description="In murE1.">
    <original>E</original>
    <variation>K</variation>
    <location>
        <position position="344"/>
    </location>
</feature>
<feature type="sequence variant" description="In murE1.">
    <original>A</original>
    <variation>S</variation>
    <location>
        <position position="495"/>
    </location>
</feature>
<feature type="helix" evidence="10">
    <location>
        <begin position="6"/>
        <end position="10"/>
    </location>
</feature>
<feature type="turn" evidence="10">
    <location>
        <begin position="11"/>
        <end position="13"/>
    </location>
</feature>
<feature type="strand" evidence="10">
    <location>
        <begin position="25"/>
        <end position="27"/>
    </location>
</feature>
<feature type="turn" evidence="10">
    <location>
        <begin position="29"/>
        <end position="31"/>
    </location>
</feature>
<feature type="strand" evidence="10">
    <location>
        <begin position="37"/>
        <end position="40"/>
    </location>
</feature>
<feature type="helix" evidence="10">
    <location>
        <begin position="48"/>
        <end position="51"/>
    </location>
</feature>
<feature type="helix" evidence="10">
    <location>
        <begin position="52"/>
        <end position="57"/>
    </location>
</feature>
<feature type="strand" evidence="10">
    <location>
        <begin position="61"/>
        <end position="66"/>
    </location>
</feature>
<feature type="turn" evidence="10">
    <location>
        <begin position="68"/>
        <end position="70"/>
    </location>
</feature>
<feature type="strand" evidence="10">
    <location>
        <begin position="75"/>
        <end position="79"/>
    </location>
</feature>
<feature type="strand" evidence="10">
    <location>
        <begin position="82"/>
        <end position="87"/>
    </location>
</feature>
<feature type="helix" evidence="10">
    <location>
        <begin position="90"/>
        <end position="101"/>
    </location>
</feature>
<feature type="helix" evidence="10">
    <location>
        <begin position="105"/>
        <end position="107"/>
    </location>
</feature>
<feature type="strand" evidence="10">
    <location>
        <begin position="108"/>
        <end position="119"/>
    </location>
</feature>
<feature type="helix" evidence="10">
    <location>
        <begin position="120"/>
        <end position="133"/>
    </location>
</feature>
<feature type="strand" evidence="10">
    <location>
        <begin position="138"/>
        <end position="142"/>
    </location>
</feature>
<feature type="strand" evidence="10">
    <location>
        <begin position="145"/>
        <end position="148"/>
    </location>
</feature>
<feature type="strand" evidence="9">
    <location>
        <begin position="156"/>
        <end position="159"/>
    </location>
</feature>
<feature type="helix" evidence="10">
    <location>
        <begin position="162"/>
        <end position="174"/>
    </location>
</feature>
<feature type="strand" evidence="10">
    <location>
        <begin position="178"/>
        <end position="183"/>
    </location>
</feature>
<feature type="helix" evidence="10">
    <location>
        <begin position="186"/>
        <end position="190"/>
    </location>
</feature>
<feature type="turn" evidence="10">
    <location>
        <begin position="191"/>
        <end position="196"/>
    </location>
</feature>
<feature type="strand" evidence="10">
    <location>
        <begin position="200"/>
        <end position="204"/>
    </location>
</feature>
<feature type="helix" evidence="9">
    <location>
        <begin position="212"/>
        <end position="215"/>
    </location>
</feature>
<feature type="helix" evidence="10">
    <location>
        <begin position="217"/>
        <end position="231"/>
    </location>
</feature>
<feature type="strand" evidence="10">
    <location>
        <begin position="236"/>
        <end position="240"/>
    </location>
</feature>
<feature type="helix" evidence="10">
    <location>
        <begin position="244"/>
        <end position="252"/>
    </location>
</feature>
<feature type="strand" evidence="10">
    <location>
        <begin position="256"/>
        <end position="263"/>
    </location>
</feature>
<feature type="helix" evidence="10">
    <location>
        <begin position="267"/>
        <end position="269"/>
    </location>
</feature>
<feature type="strand" evidence="10">
    <location>
        <begin position="272"/>
        <end position="282"/>
    </location>
</feature>
<feature type="strand" evidence="10">
    <location>
        <begin position="285"/>
        <end position="292"/>
    </location>
</feature>
<feature type="strand" evidence="10">
    <location>
        <begin position="297"/>
        <end position="301"/>
    </location>
</feature>
<feature type="helix" evidence="10">
    <location>
        <begin position="306"/>
        <end position="321"/>
    </location>
</feature>
<feature type="helix" evidence="10">
    <location>
        <begin position="326"/>
        <end position="332"/>
    </location>
</feature>
<feature type="helix" evidence="10">
    <location>
        <begin position="333"/>
        <end position="335"/>
    </location>
</feature>
<feature type="strand" evidence="10">
    <location>
        <begin position="342"/>
        <end position="346"/>
    </location>
</feature>
<feature type="strand" evidence="10">
    <location>
        <begin position="353"/>
        <end position="357"/>
    </location>
</feature>
<feature type="helix" evidence="10">
    <location>
        <begin position="362"/>
        <end position="374"/>
    </location>
</feature>
<feature type="strand" evidence="10">
    <location>
        <begin position="380"/>
        <end position="384"/>
    </location>
</feature>
<feature type="strand" evidence="10">
    <location>
        <begin position="388"/>
        <end position="390"/>
    </location>
</feature>
<feature type="helix" evidence="10">
    <location>
        <begin position="394"/>
        <end position="405"/>
    </location>
</feature>
<feature type="strand" evidence="10">
    <location>
        <begin position="407"/>
        <end position="411"/>
    </location>
</feature>
<feature type="helix" evidence="10">
    <location>
        <begin position="421"/>
        <end position="430"/>
    </location>
</feature>
<feature type="helix" evidence="10">
    <location>
        <begin position="435"/>
        <end position="437"/>
    </location>
</feature>
<feature type="strand" evidence="10">
    <location>
        <begin position="438"/>
        <end position="440"/>
    </location>
</feature>
<feature type="helix" evidence="10">
    <location>
        <begin position="444"/>
        <end position="454"/>
    </location>
</feature>
<feature type="strand" evidence="10">
    <location>
        <begin position="460"/>
        <end position="465"/>
    </location>
</feature>
<feature type="strand" evidence="10">
    <location>
        <begin position="471"/>
        <end position="474"/>
    </location>
</feature>
<feature type="strand" evidence="10">
    <location>
        <begin position="477"/>
        <end position="480"/>
    </location>
</feature>
<feature type="helix" evidence="10">
    <location>
        <begin position="483"/>
        <end position="491"/>
    </location>
</feature>
<name>MURE_ECOLI</name>